<sequence length="91" mass="10692">MEYEYPIDLDWSNEEMISVINFFNHVEKYYESGVTAGDFMGAYKRFKEIVPAKAEEKQIFNTFEKSSGYNSYKAVQDVKTHSEEQRVTAKK</sequence>
<feature type="chain" id="PRO_1000084340" description="UPF0223 protein SaurJH1_1179">
    <location>
        <begin position="1"/>
        <end position="91"/>
    </location>
</feature>
<organism>
    <name type="scientific">Staphylococcus aureus (strain JH1)</name>
    <dbReference type="NCBI Taxonomy" id="359787"/>
    <lineage>
        <taxon>Bacteria</taxon>
        <taxon>Bacillati</taxon>
        <taxon>Bacillota</taxon>
        <taxon>Bacilli</taxon>
        <taxon>Bacillales</taxon>
        <taxon>Staphylococcaceae</taxon>
        <taxon>Staphylococcus</taxon>
    </lineage>
</organism>
<evidence type="ECO:0000255" key="1">
    <source>
        <dbReference type="HAMAP-Rule" id="MF_01041"/>
    </source>
</evidence>
<dbReference type="EMBL" id="CP000736">
    <property type="protein sequence ID" value="ABR52033.1"/>
    <property type="molecule type" value="Genomic_DNA"/>
</dbReference>
<dbReference type="SMR" id="A6U0R5"/>
<dbReference type="KEGG" id="sah:SaurJH1_1179"/>
<dbReference type="HOGENOM" id="CLU_166693_0_0_9"/>
<dbReference type="Gene3D" id="1.10.220.80">
    <property type="entry name" value="BH2638-like"/>
    <property type="match status" value="1"/>
</dbReference>
<dbReference type="HAMAP" id="MF_01041">
    <property type="entry name" value="UPF0223"/>
    <property type="match status" value="1"/>
</dbReference>
<dbReference type="InterPro" id="IPR023324">
    <property type="entry name" value="BH2638-like_sf"/>
</dbReference>
<dbReference type="InterPro" id="IPR007920">
    <property type="entry name" value="UPF0223"/>
</dbReference>
<dbReference type="NCBIfam" id="NF003353">
    <property type="entry name" value="PRK04387.1"/>
    <property type="match status" value="1"/>
</dbReference>
<dbReference type="Pfam" id="PF05256">
    <property type="entry name" value="UPF0223"/>
    <property type="match status" value="1"/>
</dbReference>
<dbReference type="PIRSF" id="PIRSF037260">
    <property type="entry name" value="UPF0223"/>
    <property type="match status" value="1"/>
</dbReference>
<dbReference type="SUPFAM" id="SSF158504">
    <property type="entry name" value="BH2638-like"/>
    <property type="match status" value="1"/>
</dbReference>
<name>Y1179_STAA2</name>
<comment type="similarity">
    <text evidence="1">Belongs to the UPF0223 family.</text>
</comment>
<reference key="1">
    <citation type="submission" date="2007-06" db="EMBL/GenBank/DDBJ databases">
        <title>Complete sequence of chromosome of Staphylococcus aureus subsp. aureus JH1.</title>
        <authorList>
            <consortium name="US DOE Joint Genome Institute"/>
            <person name="Copeland A."/>
            <person name="Lucas S."/>
            <person name="Lapidus A."/>
            <person name="Barry K."/>
            <person name="Detter J.C."/>
            <person name="Glavina del Rio T."/>
            <person name="Hammon N."/>
            <person name="Israni S."/>
            <person name="Dalin E."/>
            <person name="Tice H."/>
            <person name="Pitluck S."/>
            <person name="Chain P."/>
            <person name="Malfatti S."/>
            <person name="Shin M."/>
            <person name="Vergez L."/>
            <person name="Schmutz J."/>
            <person name="Larimer F."/>
            <person name="Land M."/>
            <person name="Hauser L."/>
            <person name="Kyrpides N."/>
            <person name="Ivanova N."/>
            <person name="Tomasz A."/>
            <person name="Richardson P."/>
        </authorList>
    </citation>
    <scope>NUCLEOTIDE SEQUENCE [LARGE SCALE GENOMIC DNA]</scope>
    <source>
        <strain>JH1</strain>
    </source>
</reference>
<proteinExistence type="inferred from homology"/>
<protein>
    <recommendedName>
        <fullName evidence="1">UPF0223 protein SaurJH1_1179</fullName>
    </recommendedName>
</protein>
<accession>A6U0R5</accession>
<gene>
    <name type="ordered locus">SaurJH1_1179</name>
</gene>